<proteinExistence type="inferred from homology"/>
<reference key="1">
    <citation type="journal article" date="2003" name="Proc. Natl. Acad. Sci. U.S.A.">
        <title>The complete genome sequence of Mycobacterium bovis.</title>
        <authorList>
            <person name="Garnier T."/>
            <person name="Eiglmeier K."/>
            <person name="Camus J.-C."/>
            <person name="Medina N."/>
            <person name="Mansoor H."/>
            <person name="Pryor M."/>
            <person name="Duthoy S."/>
            <person name="Grondin S."/>
            <person name="Lacroix C."/>
            <person name="Monsempe C."/>
            <person name="Simon S."/>
            <person name="Harris B."/>
            <person name="Atkin R."/>
            <person name="Doggett J."/>
            <person name="Mayes R."/>
            <person name="Keating L."/>
            <person name="Wheeler P.R."/>
            <person name="Parkhill J."/>
            <person name="Barrell B.G."/>
            <person name="Cole S.T."/>
            <person name="Gordon S.V."/>
            <person name="Hewinson R.G."/>
        </authorList>
    </citation>
    <scope>NUCLEOTIDE SEQUENCE [LARGE SCALE GENOMIC DNA]</scope>
    <source>
        <strain>ATCC BAA-935 / AF2122/97</strain>
    </source>
</reference>
<reference key="2">
    <citation type="journal article" date="2017" name="Genome Announc.">
        <title>Updated reference genome sequence and annotation of Mycobacterium bovis AF2122/97.</title>
        <authorList>
            <person name="Malone K.M."/>
            <person name="Farrell D."/>
            <person name="Stuber T.P."/>
            <person name="Schubert O.T."/>
            <person name="Aebersold R."/>
            <person name="Robbe-Austerman S."/>
            <person name="Gordon S.V."/>
        </authorList>
    </citation>
    <scope>NUCLEOTIDE SEQUENCE [LARGE SCALE GENOMIC DNA]</scope>
    <scope>GENOME REANNOTATION</scope>
    <source>
        <strain>ATCC BAA-935 / AF2122/97</strain>
    </source>
</reference>
<accession>P67771</accession>
<accession>A0A1R3XYI9</accession>
<accession>P71782</accession>
<accession>X2BHT7</accession>
<gene>
    <name type="ordered locus">BQ2027_MB1539</name>
</gene>
<feature type="chain" id="PRO_0000215235" description="Uncharacterized protein Mb1539">
    <location>
        <begin position="1"/>
        <end position="273"/>
    </location>
</feature>
<sequence length="273" mass="30906">MIPVKVENNTSLDQVQDALNCVGYAVVEDVLDEASLAATRDRMYRVQERILTEIGKERLARAGELGVLRLMMKYDPHFFTFLEIPEVLSIVDRVLSETAILHLQNGFILPSFPPFSTPDVFQNAFHQDFPRVLSGYIASVNIMFAIDPFTRDTGATLVVPGSHQRIEKPDHTYLARNAVPVQCAAGSLFVFDSTLWHAAGRNTSGKDRLAINHQFTRSFFKQQIDYVRALGDAVVLEQPARTQQLLGWYSRVVTNLDEYYQPPDKRLYRKGQG</sequence>
<evidence type="ECO:0000305" key="1"/>
<dbReference type="EMBL" id="LT708304">
    <property type="protein sequence ID" value="SIU00142.1"/>
    <property type="molecule type" value="Genomic_DNA"/>
</dbReference>
<dbReference type="RefSeq" id="NP_855191.1">
    <property type="nucleotide sequence ID" value="NC_002945.3"/>
</dbReference>
<dbReference type="RefSeq" id="WP_003898901.1">
    <property type="nucleotide sequence ID" value="NC_002945.4"/>
</dbReference>
<dbReference type="SMR" id="P67771"/>
<dbReference type="KEGG" id="mbo:BQ2027_MB1539"/>
<dbReference type="PATRIC" id="fig|233413.5.peg.1681"/>
<dbReference type="Proteomes" id="UP000001419">
    <property type="component" value="Chromosome"/>
</dbReference>
<dbReference type="GO" id="GO:0016706">
    <property type="term" value="F:2-oxoglutarate-dependent dioxygenase activity"/>
    <property type="evidence" value="ECO:0007669"/>
    <property type="project" value="UniProtKB-ARBA"/>
</dbReference>
<dbReference type="GO" id="GO:0005506">
    <property type="term" value="F:iron ion binding"/>
    <property type="evidence" value="ECO:0007669"/>
    <property type="project" value="UniProtKB-ARBA"/>
</dbReference>
<dbReference type="Gene3D" id="2.60.120.620">
    <property type="entry name" value="q2cbj1_9rhob like domain"/>
    <property type="match status" value="1"/>
</dbReference>
<dbReference type="InterPro" id="IPR008775">
    <property type="entry name" value="Phytyl_CoA_dOase-like"/>
</dbReference>
<dbReference type="PANTHER" id="PTHR20883:SF48">
    <property type="entry name" value="ECTOINE DIOXYGENASE"/>
    <property type="match status" value="1"/>
</dbReference>
<dbReference type="PANTHER" id="PTHR20883">
    <property type="entry name" value="PHYTANOYL-COA DIOXYGENASE DOMAIN CONTAINING 1"/>
    <property type="match status" value="1"/>
</dbReference>
<dbReference type="Pfam" id="PF05721">
    <property type="entry name" value="PhyH"/>
    <property type="match status" value="1"/>
</dbReference>
<dbReference type="SUPFAM" id="SSF51197">
    <property type="entry name" value="Clavaminate synthase-like"/>
    <property type="match status" value="1"/>
</dbReference>
<organism>
    <name type="scientific">Mycobacterium bovis (strain ATCC BAA-935 / AF2122/97)</name>
    <dbReference type="NCBI Taxonomy" id="233413"/>
    <lineage>
        <taxon>Bacteria</taxon>
        <taxon>Bacillati</taxon>
        <taxon>Actinomycetota</taxon>
        <taxon>Actinomycetes</taxon>
        <taxon>Mycobacteriales</taxon>
        <taxon>Mycobacteriaceae</taxon>
        <taxon>Mycobacterium</taxon>
        <taxon>Mycobacterium tuberculosis complex</taxon>
    </lineage>
</organism>
<keyword id="KW-1185">Reference proteome</keyword>
<protein>
    <recommendedName>
        <fullName>Uncharacterized protein Mb1539</fullName>
    </recommendedName>
</protein>
<name>Y1539_MYCBO</name>
<comment type="similarity">
    <text evidence="1">Belongs to the PhyH family.</text>
</comment>